<evidence type="ECO:0000255" key="1">
    <source>
        <dbReference type="HAMAP-Rule" id="MF_00518"/>
    </source>
</evidence>
<protein>
    <recommendedName>
        <fullName evidence="1">D-aminoacyl-tRNA deacylase</fullName>
        <shortName evidence="1">DTD</shortName>
        <ecNumber evidence="1">3.1.1.96</ecNumber>
    </recommendedName>
    <alternativeName>
        <fullName evidence="1">Gly-tRNA(Ala) deacylase</fullName>
    </alternativeName>
</protein>
<name>DTD_PARUW</name>
<gene>
    <name evidence="1" type="primary">dtd</name>
    <name type="ordered locus">pc0356</name>
</gene>
<dbReference type="EC" id="3.1.1.96" evidence="1"/>
<dbReference type="EMBL" id="BX908798">
    <property type="protein sequence ID" value="CAF23080.1"/>
    <property type="molecule type" value="Genomic_DNA"/>
</dbReference>
<dbReference type="RefSeq" id="WP_011174906.1">
    <property type="nucleotide sequence ID" value="NC_005861.2"/>
</dbReference>
<dbReference type="SMR" id="Q6MEB9"/>
<dbReference type="STRING" id="264201.pc0356"/>
<dbReference type="KEGG" id="pcu:PC_RS01750"/>
<dbReference type="eggNOG" id="COG1490">
    <property type="taxonomic scope" value="Bacteria"/>
</dbReference>
<dbReference type="HOGENOM" id="CLU_076901_1_0_0"/>
<dbReference type="OrthoDB" id="9801395at2"/>
<dbReference type="Proteomes" id="UP000000529">
    <property type="component" value="Chromosome"/>
</dbReference>
<dbReference type="GO" id="GO:0005737">
    <property type="term" value="C:cytoplasm"/>
    <property type="evidence" value="ECO:0007669"/>
    <property type="project" value="UniProtKB-SubCell"/>
</dbReference>
<dbReference type="GO" id="GO:0051500">
    <property type="term" value="F:D-tyrosyl-tRNA(Tyr) deacylase activity"/>
    <property type="evidence" value="ECO:0007669"/>
    <property type="project" value="TreeGrafter"/>
</dbReference>
<dbReference type="GO" id="GO:0106026">
    <property type="term" value="F:Gly-tRNA(Ala) deacylase activity"/>
    <property type="evidence" value="ECO:0007669"/>
    <property type="project" value="UniProtKB-UniRule"/>
</dbReference>
<dbReference type="GO" id="GO:0043908">
    <property type="term" value="F:Ser(Gly)-tRNA(Ala) hydrolase activity"/>
    <property type="evidence" value="ECO:0007669"/>
    <property type="project" value="UniProtKB-UniRule"/>
</dbReference>
<dbReference type="GO" id="GO:0000049">
    <property type="term" value="F:tRNA binding"/>
    <property type="evidence" value="ECO:0007669"/>
    <property type="project" value="UniProtKB-UniRule"/>
</dbReference>
<dbReference type="GO" id="GO:0019478">
    <property type="term" value="P:D-amino acid catabolic process"/>
    <property type="evidence" value="ECO:0007669"/>
    <property type="project" value="UniProtKB-UniRule"/>
</dbReference>
<dbReference type="CDD" id="cd00563">
    <property type="entry name" value="Dtyr_deacylase"/>
    <property type="match status" value="1"/>
</dbReference>
<dbReference type="FunFam" id="3.50.80.10:FF:000001">
    <property type="entry name" value="D-aminoacyl-tRNA deacylase"/>
    <property type="match status" value="1"/>
</dbReference>
<dbReference type="Gene3D" id="3.50.80.10">
    <property type="entry name" value="D-tyrosyl-tRNA(Tyr) deacylase"/>
    <property type="match status" value="1"/>
</dbReference>
<dbReference type="HAMAP" id="MF_00518">
    <property type="entry name" value="Deacylase_Dtd"/>
    <property type="match status" value="1"/>
</dbReference>
<dbReference type="InterPro" id="IPR003732">
    <property type="entry name" value="Daa-tRNA_deacyls_DTD"/>
</dbReference>
<dbReference type="InterPro" id="IPR023509">
    <property type="entry name" value="DTD-like_sf"/>
</dbReference>
<dbReference type="NCBIfam" id="TIGR00256">
    <property type="entry name" value="D-aminoacyl-tRNA deacylase"/>
    <property type="match status" value="1"/>
</dbReference>
<dbReference type="PANTHER" id="PTHR10472:SF5">
    <property type="entry name" value="D-AMINOACYL-TRNA DEACYLASE 1"/>
    <property type="match status" value="1"/>
</dbReference>
<dbReference type="PANTHER" id="PTHR10472">
    <property type="entry name" value="D-TYROSYL-TRNA TYR DEACYLASE"/>
    <property type="match status" value="1"/>
</dbReference>
<dbReference type="Pfam" id="PF02580">
    <property type="entry name" value="Tyr_Deacylase"/>
    <property type="match status" value="1"/>
</dbReference>
<dbReference type="SUPFAM" id="SSF69500">
    <property type="entry name" value="DTD-like"/>
    <property type="match status" value="1"/>
</dbReference>
<comment type="function">
    <text evidence="1">An aminoacyl-tRNA editing enzyme that deacylates mischarged D-aminoacyl-tRNAs. Also deacylates mischarged glycyl-tRNA(Ala), protecting cells against glycine mischarging by AlaRS. Acts via tRNA-based rather than protein-based catalysis; rejects L-amino acids rather than detecting D-amino acids in the active site. By recycling D-aminoacyl-tRNA to D-amino acids and free tRNA molecules, this enzyme counteracts the toxicity associated with the formation of D-aminoacyl-tRNA entities in vivo and helps enforce protein L-homochirality.</text>
</comment>
<comment type="catalytic activity">
    <reaction evidence="1">
        <text>glycyl-tRNA(Ala) + H2O = tRNA(Ala) + glycine + H(+)</text>
        <dbReference type="Rhea" id="RHEA:53744"/>
        <dbReference type="Rhea" id="RHEA-COMP:9657"/>
        <dbReference type="Rhea" id="RHEA-COMP:13640"/>
        <dbReference type="ChEBI" id="CHEBI:15377"/>
        <dbReference type="ChEBI" id="CHEBI:15378"/>
        <dbReference type="ChEBI" id="CHEBI:57305"/>
        <dbReference type="ChEBI" id="CHEBI:78442"/>
        <dbReference type="ChEBI" id="CHEBI:78522"/>
        <dbReference type="EC" id="3.1.1.96"/>
    </reaction>
</comment>
<comment type="catalytic activity">
    <reaction evidence="1">
        <text>a D-aminoacyl-tRNA + H2O = a tRNA + a D-alpha-amino acid + H(+)</text>
        <dbReference type="Rhea" id="RHEA:13953"/>
        <dbReference type="Rhea" id="RHEA-COMP:10123"/>
        <dbReference type="Rhea" id="RHEA-COMP:10124"/>
        <dbReference type="ChEBI" id="CHEBI:15377"/>
        <dbReference type="ChEBI" id="CHEBI:15378"/>
        <dbReference type="ChEBI" id="CHEBI:59871"/>
        <dbReference type="ChEBI" id="CHEBI:78442"/>
        <dbReference type="ChEBI" id="CHEBI:79333"/>
        <dbReference type="EC" id="3.1.1.96"/>
    </reaction>
</comment>
<comment type="subunit">
    <text evidence="1">Homodimer.</text>
</comment>
<comment type="subcellular location">
    <subcellularLocation>
        <location evidence="1">Cytoplasm</location>
    </subcellularLocation>
</comment>
<comment type="domain">
    <text evidence="1">A Gly-cisPro motif from one monomer fits into the active site of the other monomer to allow specific chiral rejection of L-amino acids.</text>
</comment>
<comment type="similarity">
    <text evidence="1">Belongs to the DTD family.</text>
</comment>
<sequence>MKLVIQRVLQAQVYIDDNLFSAIGPGLMLLLGIHHQDNLEQILWSVDKLVHLRIFNDENGKMNRNVKECEGEILVVSQFTLYGNCLNGRRPDFIQAASPPIALSLYRQFIDELKKEAPHVKTGQFGAQMQVSLTNDGPVTFILESLDRRKA</sequence>
<keyword id="KW-0963">Cytoplasm</keyword>
<keyword id="KW-0378">Hydrolase</keyword>
<keyword id="KW-1185">Reference proteome</keyword>
<keyword id="KW-0694">RNA-binding</keyword>
<keyword id="KW-0820">tRNA-binding</keyword>
<feature type="chain" id="PRO_0000164568" description="D-aminoacyl-tRNA deacylase">
    <location>
        <begin position="1"/>
        <end position="151"/>
    </location>
</feature>
<feature type="short sequence motif" description="Gly-cisPro motif, important for rejection of L-amino acids" evidence="1">
    <location>
        <begin position="137"/>
        <end position="138"/>
    </location>
</feature>
<proteinExistence type="inferred from homology"/>
<organism>
    <name type="scientific">Protochlamydia amoebophila (strain UWE25)</name>
    <dbReference type="NCBI Taxonomy" id="264201"/>
    <lineage>
        <taxon>Bacteria</taxon>
        <taxon>Pseudomonadati</taxon>
        <taxon>Chlamydiota</taxon>
        <taxon>Chlamydiia</taxon>
        <taxon>Parachlamydiales</taxon>
        <taxon>Parachlamydiaceae</taxon>
        <taxon>Candidatus Protochlamydia</taxon>
    </lineage>
</organism>
<accession>Q6MEB9</accession>
<reference key="1">
    <citation type="journal article" date="2004" name="Science">
        <title>Illuminating the evolutionary history of chlamydiae.</title>
        <authorList>
            <person name="Horn M."/>
            <person name="Collingro A."/>
            <person name="Schmitz-Esser S."/>
            <person name="Beier C.L."/>
            <person name="Purkhold U."/>
            <person name="Fartmann B."/>
            <person name="Brandt P."/>
            <person name="Nyakatura G.J."/>
            <person name="Droege M."/>
            <person name="Frishman D."/>
            <person name="Rattei T."/>
            <person name="Mewes H.-W."/>
            <person name="Wagner M."/>
        </authorList>
    </citation>
    <scope>NUCLEOTIDE SEQUENCE [LARGE SCALE GENOMIC DNA]</scope>
    <source>
        <strain>UWE25</strain>
    </source>
</reference>